<reference key="1">
    <citation type="journal article" date="1999" name="J. Biol. Chem.">
        <title>Up-regulation of nuclear and mitochondrial genes in the skeletal muscle of mice lacking the heart/muscle isoform of the adenine nucleotide translocator.</title>
        <authorList>
            <person name="Murdock D.G."/>
            <person name="Boone B.E."/>
            <person name="Esposito L.A."/>
            <person name="Wallace D.C."/>
        </authorList>
    </citation>
    <scope>NUCLEOTIDE SEQUENCE [MRNA]</scope>
    <source>
        <strain>BALB/cJ</strain>
        <tissue>Skeletal muscle</tissue>
    </source>
</reference>
<reference key="2">
    <citation type="journal article" date="2004" name="Genome Res.">
        <title>The status, quality, and expansion of the NIH full-length cDNA project: the Mammalian Gene Collection (MGC).</title>
        <authorList>
            <consortium name="The MGC Project Team"/>
        </authorList>
    </citation>
    <scope>NUCLEOTIDE SEQUENCE [LARGE SCALE MRNA]</scope>
    <source>
        <strain>Czech II</strain>
        <tissue>Mammary gland</tissue>
    </source>
</reference>
<reference key="3">
    <citation type="journal article" date="2008" name="J. Proteome Res.">
        <title>Large-scale identification and evolution indexing of tyrosine phosphorylation sites from murine brain.</title>
        <authorList>
            <person name="Ballif B.A."/>
            <person name="Carey G.R."/>
            <person name="Sunyaev S.R."/>
            <person name="Gygi S.P."/>
        </authorList>
    </citation>
    <scope>PHOSPHORYLATION [LARGE SCALE ANALYSIS] AT TYR-473</scope>
    <scope>IDENTIFICATION BY MASS SPECTROMETRY [LARGE SCALE ANALYSIS]</scope>
    <source>
        <tissue>Brain</tissue>
    </source>
</reference>
<reference key="4">
    <citation type="journal article" date="2010" name="Cell">
        <title>A tissue-specific atlas of mouse protein phosphorylation and expression.</title>
        <authorList>
            <person name="Huttlin E.L."/>
            <person name="Jedrychowski M.P."/>
            <person name="Elias J.E."/>
            <person name="Goswami T."/>
            <person name="Rad R."/>
            <person name="Beausoleil S.A."/>
            <person name="Villen J."/>
            <person name="Haas W."/>
            <person name="Sowa M.E."/>
            <person name="Gygi S.P."/>
        </authorList>
    </citation>
    <scope>PHOSPHORYLATION [LARGE SCALE ANALYSIS] AT SER-430</scope>
    <scope>IDENTIFICATION BY MASS SPECTROMETRY [LARGE SCALE ANALYSIS]</scope>
    <source>
        <tissue>Brain</tissue>
        <tissue>Brown adipose tissue</tissue>
        <tissue>Heart</tissue>
        <tissue>Kidney</tissue>
        <tissue>Lung</tissue>
        <tissue>Spleen</tissue>
        <tissue>Testis</tissue>
    </source>
</reference>
<protein>
    <recommendedName>
        <fullName evidence="3">Glycogen phosphorylase, muscle form</fullName>
        <ecNumber evidence="3">2.4.1.1</ecNumber>
    </recommendedName>
    <alternativeName>
        <fullName>Myophosphorylase</fullName>
    </alternativeName>
</protein>
<evidence type="ECO:0000250" key="1">
    <source>
        <dbReference type="UniProtKB" id="P00489"/>
    </source>
</evidence>
<evidence type="ECO:0000250" key="2">
    <source>
        <dbReference type="UniProtKB" id="P09812"/>
    </source>
</evidence>
<evidence type="ECO:0000250" key="3">
    <source>
        <dbReference type="UniProtKB" id="P11217"/>
    </source>
</evidence>
<evidence type="ECO:0000305" key="4"/>
<evidence type="ECO:0000312" key="5">
    <source>
        <dbReference type="MGI" id="MGI:97830"/>
    </source>
</evidence>
<evidence type="ECO:0007744" key="6">
    <source>
    </source>
</evidence>
<evidence type="ECO:0007744" key="7">
    <source>
    </source>
</evidence>
<comment type="function">
    <text evidence="3">Allosteric enzyme that catalyzes the rate-limiting step in glycogen catabolism, the phosphorolytic cleavage of glycogen to produce glucose-1-phosphate, and plays a central role in maintaining cellular and organismal glucose homeostasis.</text>
</comment>
<comment type="catalytic activity">
    <reaction evidence="3">
        <text>[(1-&gt;4)-alpha-D-glucosyl](n) + phosphate = [(1-&gt;4)-alpha-D-glucosyl](n-1) + alpha-D-glucose 1-phosphate</text>
        <dbReference type="Rhea" id="RHEA:41732"/>
        <dbReference type="Rhea" id="RHEA-COMP:9584"/>
        <dbReference type="Rhea" id="RHEA-COMP:9586"/>
        <dbReference type="ChEBI" id="CHEBI:15444"/>
        <dbReference type="ChEBI" id="CHEBI:43474"/>
        <dbReference type="ChEBI" id="CHEBI:58601"/>
        <dbReference type="EC" id="2.4.1.1"/>
    </reaction>
    <physiologicalReaction direction="left-to-right" evidence="3">
        <dbReference type="Rhea" id="RHEA:41733"/>
    </physiologicalReaction>
</comment>
<comment type="cofactor">
    <cofactor evidence="1">
        <name>pyridoxal 5'-phosphate</name>
        <dbReference type="ChEBI" id="CHEBI:597326"/>
    </cofactor>
</comment>
<comment type="activity regulation">
    <text evidence="3">Allosterically regulated through the non-covalent binding of metabolites, being activated by AMP and inhibited by ATP, ADP, and glucose-6-phosphate. The activity is also controlled by post-translational modifications including phosphorylation.</text>
</comment>
<comment type="subunit">
    <text evidence="3">Homodimer. Homotetramer; to form the enzymatically active phosphorylase A.</text>
</comment>
<comment type="PTM">
    <text evidence="3">Phosphorylation of Ser-15 converts phosphorylase B (unphosphorylated) to phosphorylase A.</text>
</comment>
<comment type="similarity">
    <text evidence="4">Belongs to the glycogen phosphorylase family.</text>
</comment>
<sequence>MSRPLSDQDKRKQISVRGLAGVENVSELKKNFNRHLHFTLVKDRNVATPRDYYFALAHTVRDHLVGRWIRTQQHYYEKDPKRIYYLSLEFYMGRTLQNTMVNLALENACDEATYQLGLDMEELEEIEEDAGLGNGGLGRLAACFLDSMATLGLAAYGYGIRYEFGIFNQKICGGWQMEEADDWLRYGNPWEKARPEFTLPVHFYGRVEHTSQGAKWVDTQVVLAMPYDTPVPGYRNNVVNTMRLWSAKAPNDFNLKDFNVGGYIQAVLDRNLAENISRVLYPNDNFFEGKELRLKQEYFVVAATLQDIIRRFKSSKFGSRDPVRTNFDAFPDKVAIQLNDTHPSLAIPELMRILVDLERLDWDKAWDVTVKTCAYTNHTVLPEALERWPVHLMETLLPRHLQIIYEINQRFLNRVAAAFPGDVDRLRRMSLVEEGAVKRINMAHLCIAGSHAVNGVARIHSEILKKTIFKDFYELEPHKFQNKTNGITPRRWLVLCNPGLAEVIAERIGEDYISDLDQLRKLLSYVDDEAFIRDVAKVKQENKLKFSAYLEREYKVHINPNSLFDVQVKRIHEYKRQLLNCLHIITLYNRIKREPNRFMVPRTIMIGGKAAPGYHMAKMIIKLITAIGDVVNHDPAVGDRLRVIFLENYRVSLAEKVIPAADLSEQISTAGTEASGTGNMKFMLNGALTIGTMDGANVEMAEEAGEENFFIFGMRVEDVERLDQRGYNAQEYYDRIPELRQIIEQLSSGFFSPKQPDLFKDIVNMLMHHDRFKVFADYEEYIKCQDKVSELYKNPREWTRMVIRNIATSGKFSSDRTIAQYAREIWGVEPSRQRLPAPDEKI</sequence>
<name>PYGM_MOUSE</name>
<keyword id="KW-0007">Acetylation</keyword>
<keyword id="KW-0021">Allosteric enzyme</keyword>
<keyword id="KW-0119">Carbohydrate metabolism</keyword>
<keyword id="KW-0321">Glycogen metabolism</keyword>
<keyword id="KW-0328">Glycosyltransferase</keyword>
<keyword id="KW-0547">Nucleotide-binding</keyword>
<keyword id="KW-0597">Phosphoprotein</keyword>
<keyword id="KW-0663">Pyridoxal phosphate</keyword>
<keyword id="KW-1185">Reference proteome</keyword>
<keyword id="KW-0808">Transferase</keyword>
<accession>Q9WUB3</accession>
<feature type="initiator methionine" description="Removed" evidence="1">
    <location>
        <position position="1"/>
    </location>
</feature>
<feature type="chain" id="PRO_0000188531" description="Glycogen phosphorylase, muscle form">
    <location>
        <begin position="2"/>
        <end position="842"/>
    </location>
</feature>
<feature type="binding site" evidence="3">
    <location>
        <position position="43"/>
    </location>
    <ligand>
        <name>AMP</name>
        <dbReference type="ChEBI" id="CHEBI:456215"/>
    </ligand>
</feature>
<feature type="binding site" evidence="3">
    <location>
        <position position="76"/>
    </location>
    <ligand>
        <name>AMP</name>
        <dbReference type="ChEBI" id="CHEBI:456215"/>
    </ligand>
</feature>
<feature type="binding site" evidence="3">
    <location>
        <begin position="310"/>
        <end position="319"/>
    </location>
    <ligand>
        <name>AMP</name>
        <dbReference type="ChEBI" id="CHEBI:456215"/>
    </ligand>
</feature>
<feature type="site" description="Involved in the association of subunits" evidence="1">
    <location>
        <position position="109"/>
    </location>
</feature>
<feature type="site" description="Involved in the association of subunits" evidence="1">
    <location>
        <position position="143"/>
    </location>
</feature>
<feature type="site" description="May be involved in allosteric control" evidence="1">
    <location>
        <position position="156"/>
    </location>
</feature>
<feature type="modified residue" description="N-acetylserine" evidence="1">
    <location>
        <position position="2"/>
    </location>
</feature>
<feature type="modified residue" description="Phosphoserine; by PHK; in form phosphorylase A" evidence="3">
    <location>
        <position position="15"/>
    </location>
</feature>
<feature type="modified residue" description="Phosphotyrosine" evidence="2">
    <location>
        <position position="204"/>
    </location>
</feature>
<feature type="modified residue" description="Phosphotyrosine" evidence="2">
    <location>
        <position position="227"/>
    </location>
</feature>
<feature type="modified residue" description="Phosphoserine" evidence="7">
    <location>
        <position position="430"/>
    </location>
</feature>
<feature type="modified residue" description="Phosphotyrosine" evidence="6">
    <location>
        <position position="473"/>
    </location>
</feature>
<feature type="modified residue" description="Phosphoserine" evidence="2">
    <location>
        <position position="514"/>
    </location>
</feature>
<feature type="modified residue" description="N6-(pyridoxal phosphate)lysine" evidence="1">
    <location>
        <position position="681"/>
    </location>
</feature>
<feature type="modified residue" description="Phosphoserine" evidence="2">
    <location>
        <position position="747"/>
    </location>
</feature>
<feature type="modified residue" description="Phosphoserine" evidence="2">
    <location>
        <position position="748"/>
    </location>
</feature>
<dbReference type="EC" id="2.4.1.1" evidence="3"/>
<dbReference type="EMBL" id="AF124787">
    <property type="protein sequence ID" value="AAD30476.1"/>
    <property type="molecule type" value="mRNA"/>
</dbReference>
<dbReference type="EMBL" id="BC012961">
    <property type="protein sequence ID" value="AAH12961.1"/>
    <property type="molecule type" value="mRNA"/>
</dbReference>
<dbReference type="CCDS" id="CCDS29504.1"/>
<dbReference type="RefSeq" id="NP_035354.1">
    <property type="nucleotide sequence ID" value="NM_011224.2"/>
</dbReference>
<dbReference type="SMR" id="Q9WUB3"/>
<dbReference type="BioGRID" id="202528">
    <property type="interactions" value="24"/>
</dbReference>
<dbReference type="FunCoup" id="Q9WUB3">
    <property type="interactions" value="627"/>
</dbReference>
<dbReference type="IntAct" id="Q9WUB3">
    <property type="interactions" value="6"/>
</dbReference>
<dbReference type="STRING" id="10090.ENSMUSP00000047564"/>
<dbReference type="CAZy" id="GT35">
    <property type="family name" value="Glycosyltransferase Family 35"/>
</dbReference>
<dbReference type="GlyGen" id="Q9WUB3">
    <property type="glycosylation" value="2 sites, 1 N-linked glycan (1 site), 1 O-linked glycan (1 site)"/>
</dbReference>
<dbReference type="iPTMnet" id="Q9WUB3"/>
<dbReference type="PhosphoSitePlus" id="Q9WUB3"/>
<dbReference type="SwissPalm" id="Q9WUB3"/>
<dbReference type="jPOST" id="Q9WUB3"/>
<dbReference type="PaxDb" id="10090-ENSMUSP00000047564"/>
<dbReference type="PeptideAtlas" id="Q9WUB3"/>
<dbReference type="ProteomicsDB" id="300365"/>
<dbReference type="Antibodypedia" id="29416">
    <property type="antibodies" value="317 antibodies from 29 providers"/>
</dbReference>
<dbReference type="Ensembl" id="ENSMUST00000035269.15">
    <property type="protein sequence ID" value="ENSMUSP00000047564.9"/>
    <property type="gene ID" value="ENSMUSG00000032648.15"/>
</dbReference>
<dbReference type="GeneID" id="19309"/>
<dbReference type="KEGG" id="mmu:19309"/>
<dbReference type="UCSC" id="uc008gio.1">
    <property type="organism name" value="mouse"/>
</dbReference>
<dbReference type="AGR" id="MGI:97830"/>
<dbReference type="CTD" id="5837"/>
<dbReference type="MGI" id="MGI:97830">
    <property type="gene designation" value="Pygm"/>
</dbReference>
<dbReference type="VEuPathDB" id="HostDB:ENSMUSG00000032648"/>
<dbReference type="eggNOG" id="KOG2099">
    <property type="taxonomic scope" value="Eukaryota"/>
</dbReference>
<dbReference type="GeneTree" id="ENSGT00950000183148"/>
<dbReference type="HOGENOM" id="CLU_010198_1_1_1"/>
<dbReference type="InParanoid" id="Q9WUB3"/>
<dbReference type="OMA" id="GIEPCRC"/>
<dbReference type="OrthoDB" id="9215500at2759"/>
<dbReference type="PhylomeDB" id="Q9WUB3"/>
<dbReference type="TreeFam" id="TF300309"/>
<dbReference type="BRENDA" id="2.4.1.1">
    <property type="organism ID" value="3474"/>
</dbReference>
<dbReference type="Reactome" id="R-MMU-70221">
    <property type="pathway name" value="Glycogen breakdown (glycogenolysis)"/>
</dbReference>
<dbReference type="BioGRID-ORCS" id="19309">
    <property type="hits" value="3 hits in 78 CRISPR screens"/>
</dbReference>
<dbReference type="ChiTaRS" id="Pygm">
    <property type="organism name" value="mouse"/>
</dbReference>
<dbReference type="PRO" id="PR:Q9WUB3"/>
<dbReference type="Proteomes" id="UP000000589">
    <property type="component" value="Chromosome 19"/>
</dbReference>
<dbReference type="RNAct" id="Q9WUB3">
    <property type="molecule type" value="protein"/>
</dbReference>
<dbReference type="Bgee" id="ENSMUSG00000032648">
    <property type="expression patterns" value="Expressed in hindlimb stylopod muscle and 128 other cell types or tissues"/>
</dbReference>
<dbReference type="ExpressionAtlas" id="Q9WUB3">
    <property type="expression patterns" value="baseline and differential"/>
</dbReference>
<dbReference type="GO" id="GO:0030018">
    <property type="term" value="C:Z disc"/>
    <property type="evidence" value="ECO:0000266"/>
    <property type="project" value="MGI"/>
</dbReference>
<dbReference type="GO" id="GO:0008184">
    <property type="term" value="F:glycogen phosphorylase activity"/>
    <property type="evidence" value="ECO:0000314"/>
    <property type="project" value="MGI"/>
</dbReference>
<dbReference type="GO" id="GO:0000166">
    <property type="term" value="F:nucleotide binding"/>
    <property type="evidence" value="ECO:0007669"/>
    <property type="project" value="UniProtKB-KW"/>
</dbReference>
<dbReference type="GO" id="GO:0030170">
    <property type="term" value="F:pyridoxal phosphate binding"/>
    <property type="evidence" value="ECO:0007669"/>
    <property type="project" value="InterPro"/>
</dbReference>
<dbReference type="GO" id="GO:0005980">
    <property type="term" value="P:glycogen catabolic process"/>
    <property type="evidence" value="ECO:0000314"/>
    <property type="project" value="MGI"/>
</dbReference>
<dbReference type="CDD" id="cd04300">
    <property type="entry name" value="GT35_Glycogen_Phosphorylase"/>
    <property type="match status" value="1"/>
</dbReference>
<dbReference type="FunFam" id="3.40.50.2000:FF:000005">
    <property type="entry name" value="Alpha-1,4 glucan phosphorylase"/>
    <property type="match status" value="1"/>
</dbReference>
<dbReference type="FunFam" id="3.40.50.2000:FF:000153">
    <property type="entry name" value="Alpha-1,4 glucan phosphorylase"/>
    <property type="match status" value="1"/>
</dbReference>
<dbReference type="FunFam" id="3.40.50.2000:FF:000197">
    <property type="entry name" value="Alpha-1,4 glucan phosphorylase"/>
    <property type="match status" value="1"/>
</dbReference>
<dbReference type="Gene3D" id="3.40.50.2000">
    <property type="entry name" value="Glycogen Phosphorylase B"/>
    <property type="match status" value="2"/>
</dbReference>
<dbReference type="InterPro" id="IPR011833">
    <property type="entry name" value="Glycg_phsphrylas"/>
</dbReference>
<dbReference type="InterPro" id="IPR000811">
    <property type="entry name" value="Glyco_trans_35"/>
</dbReference>
<dbReference type="InterPro" id="IPR035090">
    <property type="entry name" value="Pyridoxal_P_attach_site"/>
</dbReference>
<dbReference type="NCBIfam" id="TIGR02093">
    <property type="entry name" value="P_ylase"/>
    <property type="match status" value="1"/>
</dbReference>
<dbReference type="PANTHER" id="PTHR11468">
    <property type="entry name" value="GLYCOGEN PHOSPHORYLASE"/>
    <property type="match status" value="1"/>
</dbReference>
<dbReference type="PANTHER" id="PTHR11468:SF32">
    <property type="entry name" value="GLYCOGEN PHOSPHORYLASE, MUSCLE FORM"/>
    <property type="match status" value="1"/>
</dbReference>
<dbReference type="Pfam" id="PF00343">
    <property type="entry name" value="Phosphorylase"/>
    <property type="match status" value="1"/>
</dbReference>
<dbReference type="PIRSF" id="PIRSF000460">
    <property type="entry name" value="Pprylas_GlgP"/>
    <property type="match status" value="1"/>
</dbReference>
<dbReference type="SUPFAM" id="SSF53756">
    <property type="entry name" value="UDP-Glycosyltransferase/glycogen phosphorylase"/>
    <property type="match status" value="1"/>
</dbReference>
<dbReference type="PROSITE" id="PS00102">
    <property type="entry name" value="PHOSPHORYLASE"/>
    <property type="match status" value="1"/>
</dbReference>
<organism>
    <name type="scientific">Mus musculus</name>
    <name type="common">Mouse</name>
    <dbReference type="NCBI Taxonomy" id="10090"/>
    <lineage>
        <taxon>Eukaryota</taxon>
        <taxon>Metazoa</taxon>
        <taxon>Chordata</taxon>
        <taxon>Craniata</taxon>
        <taxon>Vertebrata</taxon>
        <taxon>Euteleostomi</taxon>
        <taxon>Mammalia</taxon>
        <taxon>Eutheria</taxon>
        <taxon>Euarchontoglires</taxon>
        <taxon>Glires</taxon>
        <taxon>Rodentia</taxon>
        <taxon>Myomorpha</taxon>
        <taxon>Muroidea</taxon>
        <taxon>Muridae</taxon>
        <taxon>Murinae</taxon>
        <taxon>Mus</taxon>
        <taxon>Mus</taxon>
    </lineage>
</organism>
<gene>
    <name evidence="5" type="primary">Pygm</name>
</gene>
<proteinExistence type="evidence at protein level"/>